<reference key="1">
    <citation type="submission" date="2004-11" db="EMBL/GenBank/DDBJ databases">
        <authorList>
            <consortium name="The German cDNA consortium"/>
        </authorList>
    </citation>
    <scope>NUCLEOTIDE SEQUENCE [LARGE SCALE MRNA]</scope>
    <source>
        <tissue>Brain cortex</tissue>
    </source>
</reference>
<protein>
    <recommendedName>
        <fullName evidence="3">Splicing factor C9orf78 homolog</fullName>
    </recommendedName>
</protein>
<comment type="function">
    <text evidence="1">Plays a role in pre-mRNA splicing by promoting usage of the upstream 3'-splice site at alternative NAGNAG splice sites; these are sites featuring alternative acceptor motifs separated by only a few nucleotides (By similarity). May also modulate exon inclusion events (By similarity). Plays a role in spliceosomal remodeling by displacing WBP4 from SNRNP200 and may act to inhibit SNRNP200 helicase activity (By similarity). Binds U5 snRNA (By similarity). Required for proper chromosome segregation (By similarity). Not required for splicing of shelterin components (By similarity).</text>
</comment>
<comment type="subunit">
    <text evidence="1">Component of the spliceosome (By similarity). Interacts with SNRNP200; the interaction is direct (By similarity). Interacts with PRPF8 (By similarity).</text>
</comment>
<comment type="subcellular location">
    <subcellularLocation>
        <location evidence="1">Nucleus</location>
    </subcellularLocation>
    <subcellularLocation>
        <location evidence="1">Chromosome</location>
        <location evidence="1">Centromere</location>
    </subcellularLocation>
    <text evidence="1">Dispersed throughout the nucleus during interphase (By similarity). Colocalizes with microtubule attachment sites at centromeres following mitotic checkpoint activation (By similarity).</text>
</comment>
<comment type="similarity">
    <text>Belongs to the TLS1 family.</text>
</comment>
<feature type="chain" id="PRO_0000227525" description="Splicing factor C9orf78 homolog">
    <location>
        <begin position="1"/>
        <end position="289"/>
    </location>
</feature>
<feature type="region of interest" description="Disordered" evidence="2">
    <location>
        <begin position="1"/>
        <end position="27"/>
    </location>
</feature>
<feature type="region of interest" description="Interaction with SNRNP200" evidence="1">
    <location>
        <begin position="5"/>
        <end position="58"/>
    </location>
</feature>
<feature type="region of interest" description="Disordered" evidence="2">
    <location>
        <begin position="86"/>
        <end position="109"/>
    </location>
</feature>
<feature type="region of interest" description="Disordered" evidence="2">
    <location>
        <begin position="232"/>
        <end position="289"/>
    </location>
</feature>
<feature type="compositionally biased region" description="Basic residues" evidence="2">
    <location>
        <begin position="1"/>
        <end position="12"/>
    </location>
</feature>
<feature type="compositionally biased region" description="Basic and acidic residues" evidence="2">
    <location>
        <begin position="232"/>
        <end position="283"/>
    </location>
</feature>
<feature type="modified residue" description="Phosphoserine" evidence="1">
    <location>
        <position position="15"/>
    </location>
</feature>
<feature type="modified residue" description="Phosphoserine" evidence="1">
    <location>
        <position position="17"/>
    </location>
</feature>
<feature type="modified residue" description="Phosphotyrosine" evidence="1">
    <location>
        <position position="147"/>
    </location>
</feature>
<feature type="modified residue" description="Phosphothreonine" evidence="1">
    <location>
        <position position="253"/>
    </location>
</feature>
<feature type="modified residue" description="Phosphoserine" evidence="1">
    <location>
        <position position="261"/>
    </location>
</feature>
<keyword id="KW-0137">Centromere</keyword>
<keyword id="KW-0158">Chromosome</keyword>
<keyword id="KW-0159">Chromosome partition</keyword>
<keyword id="KW-0507">mRNA processing</keyword>
<keyword id="KW-0508">mRNA splicing</keyword>
<keyword id="KW-0539">Nucleus</keyword>
<keyword id="KW-0597">Phosphoprotein</keyword>
<keyword id="KW-1185">Reference proteome</keyword>
<keyword id="KW-0694">RNA-binding</keyword>
<keyword id="KW-0747">Spliceosome</keyword>
<dbReference type="EMBL" id="CR858393">
    <property type="protein sequence ID" value="CAH90620.1"/>
    <property type="molecule type" value="mRNA"/>
</dbReference>
<dbReference type="RefSeq" id="NP_001125335.1">
    <property type="nucleotide sequence ID" value="NM_001131863.1"/>
</dbReference>
<dbReference type="SMR" id="Q5RC87"/>
<dbReference type="FunCoup" id="Q5RC87">
    <property type="interactions" value="3846"/>
</dbReference>
<dbReference type="STRING" id="9601.ENSPPYP00000022064"/>
<dbReference type="GeneID" id="100172237"/>
<dbReference type="KEGG" id="pon:100172237"/>
<dbReference type="CTD" id="137438711"/>
<dbReference type="eggNOG" id="KOG3345">
    <property type="taxonomic scope" value="Eukaryota"/>
</dbReference>
<dbReference type="InParanoid" id="Q5RC87"/>
<dbReference type="OrthoDB" id="5627at2759"/>
<dbReference type="Proteomes" id="UP000001595">
    <property type="component" value="Unplaced"/>
</dbReference>
<dbReference type="GO" id="GO:0000775">
    <property type="term" value="C:chromosome, centromeric region"/>
    <property type="evidence" value="ECO:0007669"/>
    <property type="project" value="UniProtKB-SubCell"/>
</dbReference>
<dbReference type="GO" id="GO:0005681">
    <property type="term" value="C:spliceosomal complex"/>
    <property type="evidence" value="ECO:0007669"/>
    <property type="project" value="UniProtKB-KW"/>
</dbReference>
<dbReference type="GO" id="GO:0003723">
    <property type="term" value="F:RNA binding"/>
    <property type="evidence" value="ECO:0007669"/>
    <property type="project" value="UniProtKB-KW"/>
</dbReference>
<dbReference type="GO" id="GO:0007059">
    <property type="term" value="P:chromosome segregation"/>
    <property type="evidence" value="ECO:0007669"/>
    <property type="project" value="UniProtKB-KW"/>
</dbReference>
<dbReference type="GO" id="GO:0000398">
    <property type="term" value="P:mRNA splicing, via spliceosome"/>
    <property type="evidence" value="ECO:0007669"/>
    <property type="project" value="TreeGrafter"/>
</dbReference>
<dbReference type="InterPro" id="IPR010756">
    <property type="entry name" value="Tls1-like"/>
</dbReference>
<dbReference type="PANTHER" id="PTHR13486:SF2">
    <property type="entry name" value="SPLICING FACTOR C9ORF78"/>
    <property type="match status" value="1"/>
</dbReference>
<dbReference type="PANTHER" id="PTHR13486">
    <property type="entry name" value="TELOMERE LENGTH AND SILENCING PROTEIN 1 TLS1 FAMILY MEMBER"/>
    <property type="match status" value="1"/>
</dbReference>
<dbReference type="Pfam" id="PF07052">
    <property type="entry name" value="Hep_59"/>
    <property type="match status" value="1"/>
</dbReference>
<sequence length="289" mass="33703">MPVVRKIFRRRRGDSESEEDEQDSEEVRLKLEETREVQNLRKRPNGVSAVALLVGEKVQEETTLVDDPFQMKTGGMVDMKKLKERGKDKISEEEDLHLGTSFSAETNRRDEDADMMKYIETELKKRKGIVEHEEQKVKPKNAEDCLYELPENIRVSSAKKTEEMLSNQMLSGIPEVDQGIDAKIKNIISTEDAKARLLAEQQNKKKDSETSFVPTNMAVNYVQHNRFYHEELNAPIRRNKEEPKARPLRVGDTEKPEPERSPPNRKRPANEKATDDYHYEKFKKMNRRY</sequence>
<name>TLS1_PONAB</name>
<evidence type="ECO:0000250" key="1">
    <source>
        <dbReference type="UniProtKB" id="Q9NZ63"/>
    </source>
</evidence>
<evidence type="ECO:0000256" key="2">
    <source>
        <dbReference type="SAM" id="MobiDB-lite"/>
    </source>
</evidence>
<evidence type="ECO:0000305" key="3"/>
<proteinExistence type="evidence at transcript level"/>
<organism>
    <name type="scientific">Pongo abelii</name>
    <name type="common">Sumatran orangutan</name>
    <name type="synonym">Pongo pygmaeus abelii</name>
    <dbReference type="NCBI Taxonomy" id="9601"/>
    <lineage>
        <taxon>Eukaryota</taxon>
        <taxon>Metazoa</taxon>
        <taxon>Chordata</taxon>
        <taxon>Craniata</taxon>
        <taxon>Vertebrata</taxon>
        <taxon>Euteleostomi</taxon>
        <taxon>Mammalia</taxon>
        <taxon>Eutheria</taxon>
        <taxon>Euarchontoglires</taxon>
        <taxon>Primates</taxon>
        <taxon>Haplorrhini</taxon>
        <taxon>Catarrhini</taxon>
        <taxon>Hominidae</taxon>
        <taxon>Pongo</taxon>
    </lineage>
</organism>
<accession>Q5RC87</accession>